<gene>
    <name type="primary">neoN</name>
    <name type="synonym">neo18</name>
    <name type="synonym">neoB</name>
</gene>
<keyword id="KW-0002">3D-structure</keyword>
<keyword id="KW-0032">Aminotransferase</keyword>
<keyword id="KW-0045">Antibiotic biosynthesis</keyword>
<keyword id="KW-0663">Pyridoxal phosphate</keyword>
<keyword id="KW-0808">Transferase</keyword>
<accession>Q53U08</accession>
<feature type="chain" id="PRO_0000421735" description="Neamine transaminase NeoN">
    <location>
        <begin position="1"/>
        <end position="416"/>
    </location>
</feature>
<feature type="modified residue" description="N6-(pyridoxal phosphate)lysine" evidence="1">
    <location>
        <position position="231"/>
    </location>
</feature>
<feature type="strand" evidence="5">
    <location>
        <begin position="25"/>
        <end position="30"/>
    </location>
</feature>
<feature type="strand" evidence="5">
    <location>
        <begin position="32"/>
        <end position="35"/>
    </location>
</feature>
<feature type="strand" evidence="5">
    <location>
        <begin position="40"/>
        <end position="45"/>
    </location>
</feature>
<feature type="helix" evidence="5">
    <location>
        <begin position="46"/>
        <end position="49"/>
    </location>
</feature>
<feature type="helix" evidence="5">
    <location>
        <begin position="58"/>
        <end position="68"/>
    </location>
</feature>
<feature type="turn" evidence="5">
    <location>
        <begin position="69"/>
        <end position="72"/>
    </location>
</feature>
<feature type="helix" evidence="5">
    <location>
        <begin position="80"/>
        <end position="93"/>
    </location>
</feature>
<feature type="strand" evidence="5">
    <location>
        <begin position="95"/>
        <end position="103"/>
    </location>
</feature>
<feature type="helix" evidence="5">
    <location>
        <begin position="104"/>
        <end position="119"/>
    </location>
</feature>
<feature type="strand" evidence="5">
    <location>
        <begin position="123"/>
        <end position="128"/>
    </location>
</feature>
<feature type="helix" evidence="5">
    <location>
        <begin position="134"/>
        <end position="136"/>
    </location>
</feature>
<feature type="strand" evidence="5">
    <location>
        <begin position="149"/>
        <end position="152"/>
    </location>
</feature>
<feature type="helix" evidence="5">
    <location>
        <begin position="157"/>
        <end position="163"/>
    </location>
</feature>
<feature type="helix" evidence="5">
    <location>
        <begin position="167"/>
        <end position="169"/>
    </location>
</feature>
<feature type="strand" evidence="5">
    <location>
        <begin position="170"/>
        <end position="175"/>
    </location>
</feature>
<feature type="turn" evidence="5">
    <location>
        <begin position="179"/>
        <end position="181"/>
    </location>
</feature>
<feature type="helix" evidence="5">
    <location>
        <begin position="184"/>
        <end position="197"/>
    </location>
</feature>
<feature type="strand" evidence="5">
    <location>
        <begin position="200"/>
        <end position="205"/>
    </location>
</feature>
<feature type="turn" evidence="5">
    <location>
        <begin position="206"/>
        <end position="211"/>
    </location>
</feature>
<feature type="strand" evidence="5">
    <location>
        <begin position="212"/>
        <end position="215"/>
    </location>
</feature>
<feature type="turn" evidence="5">
    <location>
        <begin position="217"/>
        <end position="222"/>
    </location>
</feature>
<feature type="strand" evidence="5">
    <location>
        <begin position="225"/>
        <end position="229"/>
    </location>
</feature>
<feature type="strand" evidence="5">
    <location>
        <begin position="240"/>
        <end position="244"/>
    </location>
</feature>
<feature type="helix" evidence="5">
    <location>
        <begin position="246"/>
        <end position="249"/>
    </location>
</feature>
<feature type="helix" evidence="5">
    <location>
        <begin position="250"/>
        <end position="254"/>
    </location>
</feature>
<feature type="turn" evidence="5">
    <location>
        <begin position="258"/>
        <end position="261"/>
    </location>
</feature>
<feature type="helix" evidence="5">
    <location>
        <begin position="263"/>
        <end position="277"/>
    </location>
</feature>
<feature type="helix" evidence="5">
    <location>
        <begin position="280"/>
        <end position="302"/>
    </location>
</feature>
<feature type="strand" evidence="5">
    <location>
        <begin position="307"/>
        <end position="311"/>
    </location>
</feature>
<feature type="strand" evidence="5">
    <location>
        <begin position="313"/>
        <end position="322"/>
    </location>
</feature>
<feature type="helix" evidence="5">
    <location>
        <begin position="323"/>
        <end position="335"/>
    </location>
</feature>
<feature type="helix" evidence="5">
    <location>
        <begin position="354"/>
        <end position="370"/>
    </location>
</feature>
<feature type="helix" evidence="5">
    <location>
        <begin position="371"/>
        <end position="374"/>
    </location>
</feature>
<feature type="helix" evidence="5">
    <location>
        <begin position="382"/>
        <end position="393"/>
    </location>
</feature>
<feature type="helix" evidence="5">
    <location>
        <begin position="403"/>
        <end position="413"/>
    </location>
</feature>
<reference key="1">
    <citation type="journal article" date="2005" name="J. Antibiot.">
        <title>Biosynthesis of 2-deoxystreptamine by three crucial enzymes in Streptomyces fradiae NBRC 12773.</title>
        <authorList>
            <person name="Kudo F."/>
            <person name="Yamamoto Y."/>
            <person name="Yokoyama K."/>
            <person name="Eguchi T."/>
            <person name="Kakinuma K."/>
        </authorList>
    </citation>
    <scope>NUCLEOTIDE SEQUENCE [GENOMIC DNA]</scope>
    <source>
        <strain>ATCC 10745 / CBS 498.68 / DSM 40063 / JCM 4133 / NBRC 12773 / NCIMB 8233 / NRRL B-1195 / VKM Ac-150</strain>
    </source>
</reference>
<reference key="2">
    <citation type="journal article" date="2005" name="Org. Biomol. Chem.">
        <title>The neomycin biosynthetic gene cluster of Streptomyces fradiae NCIMB 8233: characterisation of an aminotransferase involved in the formation of 2-deoxystreptamine.</title>
        <authorList>
            <person name="Huang F."/>
            <person name="Haydock S.F."/>
            <person name="Mironenko T."/>
            <person name="Spiteller D."/>
            <person name="Li Y."/>
            <person name="Spencer J.B."/>
        </authorList>
    </citation>
    <scope>NUCLEOTIDE SEQUENCE [GENOMIC DNA]</scope>
    <source>
        <strain>ATCC 10745 / CBS 498.68 / DSM 40063 / JCM 4133 / NBRC 12773 / NCIMB 8233 / NRRL B-1195 / VKM Ac-150</strain>
    </source>
</reference>
<reference key="3">
    <citation type="submission" date="2004-02" db="EMBL/GenBank/DDBJ databases">
        <title>Analysis and comparison of biosynthetic gene clusters for the 2-deoxy-inosamine containing aminoglycoside antibiotics ribostamycin, neomycin, lividomycin, paromomycin and butirosin.</title>
        <authorList>
            <person name="Aboshanab K.M."/>
            <person name="Schmidt-Beissner H."/>
            <person name="Wehmeier U.F."/>
            <person name="Piepersberg W."/>
            <person name="Welzel K."/>
            <person name="Vente A."/>
        </authorList>
    </citation>
    <scope>NUCLEOTIDE SEQUENCE [GENOMIC DNA]</scope>
    <source>
        <strain>ATCC 10745 / CBS 498.68 / DSM 40063 / JCM 4133 / NBRC 12773 / NCIMB 8233 / NRRL B-1195 / VKM Ac-150</strain>
    </source>
</reference>
<reference key="4">
    <citation type="journal article" date="2007" name="ChemBioChem">
        <title>Elaboration of neosamine rings in the biosynthesis of neomycin and butirosin.</title>
        <authorList>
            <person name="Huang F."/>
            <person name="Spiteller D."/>
            <person name="Koorbanally N.A."/>
            <person name="Li Y."/>
            <person name="Llewellyn N.M."/>
            <person name="Spencer J.B."/>
        </authorList>
    </citation>
    <scope>FUNCTION</scope>
    <scope>CATALYTIC ACTIVITY</scope>
    <scope>COFACTOR</scope>
    <scope>PATHWAY</scope>
    <source>
        <strain>ATCC 10745 / CBS 498.68 / DSM 40063 / JCM 4133 / NBRC 12773 / NCIMB 8233 / NRRL B-1195 / VKM Ac-150</strain>
    </source>
</reference>
<reference key="5">
    <citation type="journal article" date="2011" name="J. Appl. Microbiol.">
        <title>The oxidoreductases LivQ and NeoQ are responsible for the different 6'-modifications in the aminoglycosides lividomycin and neomycin.</title>
        <authorList>
            <person name="Clausnitzer D."/>
            <person name="Piepersberg W."/>
            <person name="Wehmeier U.F."/>
        </authorList>
    </citation>
    <scope>FUNCTION</scope>
</reference>
<sequence length="416" mass="44643">MTKNSSLLAEFPTCPRDEKDRPRVFTAASGAWLTDESGFRWIDFDNARGSILLGHGDPVVAEAVARAATGADGTATGWSRRVDAVLERLHALCGGEVVGLFRSGTAAVRAAVLAVREATGRPLLLSAGYHGYDPMWYPSEAPLEPNADGVVDFFFDLGLLRELLRAPERVAAVVVSPDHMHLSPGWYRELRRLCSAAGVVLVADEVKVGLRYAPGLSTAELLAPDVWVVAKGMANGHAVSAVGGSRRLLKPLKEVSFTSFFEPTILAAADAALARVATGEPQRAVREAGDRFLRHARKALDDASLPVEIAGDGTFFQFVPATEELEEALYGAANAEGLLFYAGDNQGVSAAFDEAVLGEAERRFARVCERLAPYAGGEPVGDAARYRVAWNVMDGLRQAPRDREETTGLLARLLDD</sequence>
<evidence type="ECO:0000250" key="1"/>
<evidence type="ECO:0000269" key="2">
    <source>
    </source>
</evidence>
<evidence type="ECO:0000269" key="3">
    <source>
    </source>
</evidence>
<evidence type="ECO:0000305" key="4"/>
<evidence type="ECO:0007829" key="5">
    <source>
        <dbReference type="PDB" id="6CBN"/>
    </source>
</evidence>
<protein>
    <recommendedName>
        <fullName>Neamine transaminase NeoN</fullName>
        <ecNumber>2.6.1.93</ecNumber>
    </recommendedName>
    <alternativeName>
        <fullName>Glutamate--6'-dehydroparomamine aminotransferase</fullName>
    </alternativeName>
    <alternativeName>
        <fullName>Neomycin C transaminase</fullName>
        <ecNumber>2.6.1.95</ecNumber>
    </alternativeName>
    <alternativeName>
        <fullName>Neomycin biosynthesis protein 18</fullName>
        <shortName>Neo-18</shortName>
    </alternativeName>
    <alternativeName>
        <fullName>Neomycin biosynthesis protein B</fullName>
    </alternativeName>
    <alternativeName>
        <fullName>Neomycin biosynthesis protein N</fullName>
    </alternativeName>
</protein>
<dbReference type="EC" id="2.6.1.93"/>
<dbReference type="EC" id="2.6.1.95"/>
<dbReference type="EMBL" id="AB211959">
    <property type="protein sequence ID" value="BAD95831.1"/>
    <property type="molecule type" value="Genomic_DNA"/>
</dbReference>
<dbReference type="EMBL" id="AJ843080">
    <property type="protein sequence ID" value="CAH58701.1"/>
    <property type="molecule type" value="Genomic_DNA"/>
</dbReference>
<dbReference type="EMBL" id="AJ629247">
    <property type="protein sequence ID" value="CAF33323.1"/>
    <property type="molecule type" value="Genomic_DNA"/>
</dbReference>
<dbReference type="RefSeq" id="WP_031132478.1">
    <property type="nucleotide sequence ID" value="NZ_MUNC01000397.1"/>
</dbReference>
<dbReference type="PDB" id="6CBK">
    <property type="method" value="X-ray"/>
    <property type="resolution" value="1.75 A"/>
    <property type="chains" value="A/B/C/D=1-416"/>
</dbReference>
<dbReference type="PDB" id="6CBL">
    <property type="method" value="X-ray"/>
    <property type="resolution" value="1.60 A"/>
    <property type="chains" value="A/B/C/D/E/F/G/H=1-416"/>
</dbReference>
<dbReference type="PDB" id="6CBM">
    <property type="method" value="X-ray"/>
    <property type="resolution" value="1.65 A"/>
    <property type="chains" value="A/B=1-416"/>
</dbReference>
<dbReference type="PDB" id="6CBN">
    <property type="method" value="X-ray"/>
    <property type="resolution" value="1.35 A"/>
    <property type="chains" value="A/B=1-416"/>
</dbReference>
<dbReference type="PDBsum" id="6CBK"/>
<dbReference type="PDBsum" id="6CBL"/>
<dbReference type="PDBsum" id="6CBM"/>
<dbReference type="PDBsum" id="6CBN"/>
<dbReference type="SMR" id="Q53U08"/>
<dbReference type="KEGG" id="ag:BAD95831"/>
<dbReference type="BioCyc" id="MetaCyc:MONOMER-17238"/>
<dbReference type="UniPathway" id="UPA00969"/>
<dbReference type="GO" id="GO:0030170">
    <property type="term" value="F:pyridoxal phosphate binding"/>
    <property type="evidence" value="ECO:0000314"/>
    <property type="project" value="UniProtKB"/>
</dbReference>
<dbReference type="GO" id="GO:0008483">
    <property type="term" value="F:transaminase activity"/>
    <property type="evidence" value="ECO:0000314"/>
    <property type="project" value="UniProtKB"/>
</dbReference>
<dbReference type="GO" id="GO:1901158">
    <property type="term" value="P:neomycin biosynthetic process"/>
    <property type="evidence" value="ECO:0000314"/>
    <property type="project" value="UniProtKB"/>
</dbReference>
<dbReference type="FunFam" id="3.40.640.10:FF:000230">
    <property type="entry name" value="Neamine transaminase NeoN"/>
    <property type="match status" value="1"/>
</dbReference>
<dbReference type="Gene3D" id="3.90.1150.10">
    <property type="entry name" value="Aspartate Aminotransferase, domain 1"/>
    <property type="match status" value="1"/>
</dbReference>
<dbReference type="Gene3D" id="3.40.640.10">
    <property type="entry name" value="Type I PLP-dependent aspartate aminotransferase-like (Major domain)"/>
    <property type="match status" value="1"/>
</dbReference>
<dbReference type="InterPro" id="IPR005814">
    <property type="entry name" value="Aminotrans_3"/>
</dbReference>
<dbReference type="InterPro" id="IPR015424">
    <property type="entry name" value="PyrdxlP-dep_Trfase"/>
</dbReference>
<dbReference type="InterPro" id="IPR015421">
    <property type="entry name" value="PyrdxlP-dep_Trfase_major"/>
</dbReference>
<dbReference type="InterPro" id="IPR015422">
    <property type="entry name" value="PyrdxlP-dep_Trfase_small"/>
</dbReference>
<dbReference type="PANTHER" id="PTHR43713">
    <property type="entry name" value="GLUTAMATE-1-SEMIALDEHYDE 2,1-AMINOMUTASE"/>
    <property type="match status" value="1"/>
</dbReference>
<dbReference type="PANTHER" id="PTHR43713:SF3">
    <property type="entry name" value="GLUTAMATE-1-SEMIALDEHYDE 2,1-AMINOMUTASE 1, CHLOROPLASTIC-RELATED"/>
    <property type="match status" value="1"/>
</dbReference>
<dbReference type="Pfam" id="PF00202">
    <property type="entry name" value="Aminotran_3"/>
    <property type="match status" value="2"/>
</dbReference>
<dbReference type="SUPFAM" id="SSF53383">
    <property type="entry name" value="PLP-dependent transferases"/>
    <property type="match status" value="1"/>
</dbReference>
<name>NEON_STRFR</name>
<proteinExistence type="evidence at protein level"/>
<organism>
    <name type="scientific">Streptomyces fradiae</name>
    <name type="common">Streptomyces roseoflavus</name>
    <dbReference type="NCBI Taxonomy" id="1906"/>
    <lineage>
        <taxon>Bacteria</taxon>
        <taxon>Bacillati</taxon>
        <taxon>Actinomycetota</taxon>
        <taxon>Actinomycetes</taxon>
        <taxon>Kitasatosporales</taxon>
        <taxon>Streptomycetaceae</taxon>
        <taxon>Streptomyces</taxon>
    </lineage>
</organism>
<comment type="function">
    <text evidence="2 3">6'-oxoglucosaminyl:L-glutamate aminotransferase that catalyzes pyridoxal-5'-phosphate-mediated transamination for the conversion of paromamine to neamine in the biosynthetic pathway of neomycin. Also able to catalyze deamination at C-6''' of neomycin.</text>
</comment>
<comment type="catalytic activity">
    <reaction evidence="2">
        <text>neomycin C + 2-oxoglutarate = 6'''-deamino-6'''-oxoneomycin C + L-glutamate</text>
        <dbReference type="Rhea" id="RHEA:33959"/>
        <dbReference type="ChEBI" id="CHEBI:16810"/>
        <dbReference type="ChEBI" id="CHEBI:29985"/>
        <dbReference type="ChEBI" id="CHEBI:65068"/>
        <dbReference type="ChEBI" id="CHEBI:65077"/>
        <dbReference type="EC" id="2.6.1.95"/>
    </reaction>
</comment>
<comment type="catalytic activity">
    <reaction evidence="2">
        <text>neamine + 2-oxoglutarate = 6'-oxoparomamine + L-glutamate</text>
        <dbReference type="Rhea" id="RHEA:34039"/>
        <dbReference type="ChEBI" id="CHEBI:16810"/>
        <dbReference type="ChEBI" id="CHEBI:29985"/>
        <dbReference type="ChEBI" id="CHEBI:65016"/>
        <dbReference type="ChEBI" id="CHEBI:65076"/>
        <dbReference type="EC" id="2.6.1.93"/>
    </reaction>
</comment>
<comment type="cofactor">
    <cofactor evidence="2">
        <name>pyridoxal 5'-phosphate</name>
        <dbReference type="ChEBI" id="CHEBI:597326"/>
    </cofactor>
</comment>
<comment type="pathway">
    <text evidence="2">Antibiotic biosynthesis; neomycin biosynthesis.</text>
</comment>
<comment type="similarity">
    <text evidence="4">Belongs to the class-III pyridoxal-phosphate-dependent aminotransferase family.</text>
</comment>